<protein>
    <recommendedName>
        <fullName evidence="1">Chaperonin GroEL 2</fullName>
        <ecNumber evidence="1">5.6.1.7</ecNumber>
    </recommendedName>
    <alternativeName>
        <fullName evidence="1">60 kDa chaperonin 2</fullName>
    </alternativeName>
    <alternativeName>
        <fullName evidence="1">Chaperonin-60 2</fullName>
        <shortName evidence="1">Cpn60 2</shortName>
    </alternativeName>
    <alternativeName>
        <fullName>Heat shock protein 60</fullName>
    </alternativeName>
</protein>
<sequence length="541" mass="56407">MAKTIAYDEEARRGLERGLNSLADAVKVTLGPKGRNVVLEKKWGAPTITNDGVSIAKEIELEDPYEKIGAELVKEVAKKTDDVAGDGTTTATVLAQALVREGLRNVAAGANPLGLKRGIEKAVEAVTAKLLDTAKEVETKEQIAATAGISAGDASIGELIAEAMDKVGKEGVITVEESNTFGLQLELTEGMRFDKGYISGYFVTDPERQEAVLEDPYILLVGSKVSTVKDLLPLLEKVIQAGKPLLIIAEDVEGEALSTLVVNKIRGTFKSVAVKAPGFGDRRKAQLADIAILTGGEVISEEVGLSLETAGIELLGQARKVVVTKDETTIVEGAGDAEAIKGRVAQIRTEIENSDSDYDREKLQERLAKLAGGVAVIKAGAATEVELKERKHRIEDAVRNAKAAVEEGIVAGGGVALLQAAPALDELKLTGDEATGANIVRVALSAPLKQIAFNAGLEPGVVAEKVSNLEAGHGLNADSGEYEDLLAAGVADPVKVTRSALQNAASIAALFLTTEAVVADKPEKAAAPAGDPTGGMGGMDF</sequence>
<keyword id="KW-0067">ATP-binding</keyword>
<keyword id="KW-0143">Chaperone</keyword>
<keyword id="KW-0963">Cytoplasm</keyword>
<keyword id="KW-0413">Isomerase</keyword>
<keyword id="KW-0547">Nucleotide-binding</keyword>
<keyword id="KW-1185">Reference proteome</keyword>
<feature type="chain" id="PRO_0000063464" description="Chaperonin GroEL 2">
    <location>
        <begin position="1"/>
        <end position="541"/>
    </location>
</feature>
<feature type="binding site" evidence="1">
    <location>
        <begin position="29"/>
        <end position="32"/>
    </location>
    <ligand>
        <name>ATP</name>
        <dbReference type="ChEBI" id="CHEBI:30616"/>
    </ligand>
</feature>
<feature type="binding site" evidence="1">
    <location>
        <begin position="86"/>
        <end position="90"/>
    </location>
    <ligand>
        <name>ATP</name>
        <dbReference type="ChEBI" id="CHEBI:30616"/>
    </ligand>
</feature>
<feature type="binding site" evidence="1">
    <location>
        <position position="413"/>
    </location>
    <ligand>
        <name>ATP</name>
        <dbReference type="ChEBI" id="CHEBI:30616"/>
    </ligand>
</feature>
<feature type="binding site" evidence="1">
    <location>
        <position position="492"/>
    </location>
    <ligand>
        <name>ATP</name>
        <dbReference type="ChEBI" id="CHEBI:30616"/>
    </ligand>
</feature>
<feature type="sequence conflict" description="In Ref. 1; AAK18613." evidence="2" ref="1">
    <original>R</original>
    <variation>C</variation>
    <location>
        <position position="13"/>
    </location>
</feature>
<feature type="sequence conflict" description="In Ref. 1; AAK18613." evidence="2" ref="1">
    <original>G</original>
    <variation>S</variation>
    <location>
        <position position="118"/>
    </location>
</feature>
<feature type="sequence conflict" description="In Ref. 1; AAK18613." evidence="2" ref="1">
    <original>A</original>
    <variation>R</variation>
    <location>
        <position position="339"/>
    </location>
</feature>
<feature type="sequence conflict" description="In Ref. 1; AAK18613." evidence="2" ref="1">
    <original>E</original>
    <variation>V</variation>
    <location>
        <position position="384"/>
    </location>
</feature>
<feature type="sequence conflict" description="In Ref. 1; AAK18613." evidence="2" ref="1">
    <original>N</original>
    <variation>K</variation>
    <location>
        <position position="468"/>
    </location>
</feature>
<feature type="sequence conflict" description="In Ref. 1; AAK18613." evidence="2" ref="1">
    <original>E</original>
    <variation>R</variation>
    <location>
        <position position="515"/>
    </location>
</feature>
<name>CH602_NOCFA</name>
<evidence type="ECO:0000255" key="1">
    <source>
        <dbReference type="HAMAP-Rule" id="MF_00600"/>
    </source>
</evidence>
<evidence type="ECO:0000305" key="2"/>
<reference key="1">
    <citation type="submission" date="2001-02" db="EMBL/GenBank/DDBJ databases">
        <title>Nocardia farcinica heat shock protein 60 (hsp60) gene.</title>
        <authorList>
            <person name="Zimmermann O.S."/>
            <person name="Koechel H.G."/>
        </authorList>
    </citation>
    <scope>NUCLEOTIDE SEQUENCE [GENOMIC DNA]</scope>
</reference>
<reference key="2">
    <citation type="journal article" date="2004" name="Proc. Natl. Acad. Sci. U.S.A.">
        <title>The complete genomic sequence of Nocardia farcinica IFM 10152.</title>
        <authorList>
            <person name="Ishikawa J."/>
            <person name="Yamashita A."/>
            <person name="Mikami Y."/>
            <person name="Hoshino Y."/>
            <person name="Kurita H."/>
            <person name="Hotta K."/>
            <person name="Shiba T."/>
            <person name="Hattori M."/>
        </authorList>
    </citation>
    <scope>NUCLEOTIDE SEQUENCE [LARGE SCALE GENOMIC DNA]</scope>
    <source>
        <strain>IFM 10152</strain>
    </source>
</reference>
<gene>
    <name evidence="1" type="primary">groEL2</name>
    <name type="synonym">groL</name>
    <name evidence="1" type="synonym">groL2</name>
    <name type="synonym">hsp60</name>
    <name type="ordered locus">NFA_52750</name>
</gene>
<proteinExistence type="inferred from homology"/>
<organism>
    <name type="scientific">Nocardia farcinica (strain IFM 10152)</name>
    <dbReference type="NCBI Taxonomy" id="247156"/>
    <lineage>
        <taxon>Bacteria</taxon>
        <taxon>Bacillati</taxon>
        <taxon>Actinomycetota</taxon>
        <taxon>Actinomycetes</taxon>
        <taxon>Mycobacteriales</taxon>
        <taxon>Nocardiaceae</taxon>
        <taxon>Nocardia</taxon>
    </lineage>
</organism>
<comment type="function">
    <text evidence="1">Together with its co-chaperonin GroES, plays an essential role in assisting protein folding. The GroEL-GroES system forms a nano-cage that allows encapsulation of the non-native substrate proteins and provides a physical environment optimized to promote and accelerate protein folding.</text>
</comment>
<comment type="catalytic activity">
    <reaction evidence="1">
        <text>ATP + H2O + a folded polypeptide = ADP + phosphate + an unfolded polypeptide.</text>
        <dbReference type="EC" id="5.6.1.7"/>
    </reaction>
</comment>
<comment type="subunit">
    <text evidence="1">Forms a cylinder of 14 subunits composed of two heptameric rings stacked back-to-back. Interacts with the co-chaperonin GroES.</text>
</comment>
<comment type="subcellular location">
    <subcellularLocation>
        <location evidence="1">Cytoplasm</location>
    </subcellularLocation>
</comment>
<comment type="similarity">
    <text evidence="1">Belongs to the chaperonin (HSP60) family.</text>
</comment>
<dbReference type="EC" id="5.6.1.7" evidence="1"/>
<dbReference type="EMBL" id="AF352577">
    <property type="protein sequence ID" value="AAK18613.1"/>
    <property type="molecule type" value="Genomic_DNA"/>
</dbReference>
<dbReference type="EMBL" id="AP006618">
    <property type="protein sequence ID" value="BAD60127.1"/>
    <property type="molecule type" value="Genomic_DNA"/>
</dbReference>
<dbReference type="RefSeq" id="WP_011211809.1">
    <property type="nucleotide sequence ID" value="NC_006361.1"/>
</dbReference>
<dbReference type="SMR" id="Q9AFA6"/>
<dbReference type="STRING" id="247156.NFA_52750"/>
<dbReference type="GeneID" id="61135851"/>
<dbReference type="KEGG" id="nfa:NFA_52750"/>
<dbReference type="eggNOG" id="COG0459">
    <property type="taxonomic scope" value="Bacteria"/>
</dbReference>
<dbReference type="HOGENOM" id="CLU_016503_3_0_11"/>
<dbReference type="OrthoDB" id="9766614at2"/>
<dbReference type="Proteomes" id="UP000006820">
    <property type="component" value="Chromosome"/>
</dbReference>
<dbReference type="GO" id="GO:0005737">
    <property type="term" value="C:cytoplasm"/>
    <property type="evidence" value="ECO:0007669"/>
    <property type="project" value="UniProtKB-SubCell"/>
</dbReference>
<dbReference type="GO" id="GO:0005524">
    <property type="term" value="F:ATP binding"/>
    <property type="evidence" value="ECO:0007669"/>
    <property type="project" value="UniProtKB-UniRule"/>
</dbReference>
<dbReference type="GO" id="GO:0140662">
    <property type="term" value="F:ATP-dependent protein folding chaperone"/>
    <property type="evidence" value="ECO:0007669"/>
    <property type="project" value="InterPro"/>
</dbReference>
<dbReference type="GO" id="GO:0016853">
    <property type="term" value="F:isomerase activity"/>
    <property type="evidence" value="ECO:0007669"/>
    <property type="project" value="UniProtKB-KW"/>
</dbReference>
<dbReference type="GO" id="GO:0051082">
    <property type="term" value="F:unfolded protein binding"/>
    <property type="evidence" value="ECO:0007669"/>
    <property type="project" value="UniProtKB-UniRule"/>
</dbReference>
<dbReference type="GO" id="GO:0042026">
    <property type="term" value="P:protein refolding"/>
    <property type="evidence" value="ECO:0007669"/>
    <property type="project" value="UniProtKB-UniRule"/>
</dbReference>
<dbReference type="CDD" id="cd03344">
    <property type="entry name" value="GroEL"/>
    <property type="match status" value="1"/>
</dbReference>
<dbReference type="FunFam" id="3.50.7.10:FF:000001">
    <property type="entry name" value="60 kDa chaperonin"/>
    <property type="match status" value="1"/>
</dbReference>
<dbReference type="Gene3D" id="3.50.7.10">
    <property type="entry name" value="GroEL"/>
    <property type="match status" value="1"/>
</dbReference>
<dbReference type="Gene3D" id="1.10.560.10">
    <property type="entry name" value="GroEL-like equatorial domain"/>
    <property type="match status" value="1"/>
</dbReference>
<dbReference type="Gene3D" id="3.30.260.10">
    <property type="entry name" value="TCP-1-like chaperonin intermediate domain"/>
    <property type="match status" value="1"/>
</dbReference>
<dbReference type="HAMAP" id="MF_00600">
    <property type="entry name" value="CH60"/>
    <property type="match status" value="1"/>
</dbReference>
<dbReference type="InterPro" id="IPR018370">
    <property type="entry name" value="Chaperonin_Cpn60_CS"/>
</dbReference>
<dbReference type="InterPro" id="IPR001844">
    <property type="entry name" value="Cpn60/GroEL"/>
</dbReference>
<dbReference type="InterPro" id="IPR002423">
    <property type="entry name" value="Cpn60/GroEL/TCP-1"/>
</dbReference>
<dbReference type="InterPro" id="IPR027409">
    <property type="entry name" value="GroEL-like_apical_dom_sf"/>
</dbReference>
<dbReference type="InterPro" id="IPR027413">
    <property type="entry name" value="GROEL-like_equatorial_sf"/>
</dbReference>
<dbReference type="InterPro" id="IPR027410">
    <property type="entry name" value="TCP-1-like_intermed_sf"/>
</dbReference>
<dbReference type="NCBIfam" id="TIGR02348">
    <property type="entry name" value="GroEL"/>
    <property type="match status" value="1"/>
</dbReference>
<dbReference type="NCBIfam" id="NF000592">
    <property type="entry name" value="PRK00013.1"/>
    <property type="match status" value="1"/>
</dbReference>
<dbReference type="NCBIfam" id="NF009487">
    <property type="entry name" value="PRK12849.1"/>
    <property type="match status" value="1"/>
</dbReference>
<dbReference type="NCBIfam" id="NF009488">
    <property type="entry name" value="PRK12850.1"/>
    <property type="match status" value="1"/>
</dbReference>
<dbReference type="NCBIfam" id="NF009489">
    <property type="entry name" value="PRK12851.1"/>
    <property type="match status" value="1"/>
</dbReference>
<dbReference type="PANTHER" id="PTHR45633">
    <property type="entry name" value="60 KDA HEAT SHOCK PROTEIN, MITOCHONDRIAL"/>
    <property type="match status" value="1"/>
</dbReference>
<dbReference type="Pfam" id="PF00118">
    <property type="entry name" value="Cpn60_TCP1"/>
    <property type="match status" value="1"/>
</dbReference>
<dbReference type="PRINTS" id="PR00298">
    <property type="entry name" value="CHAPERONIN60"/>
</dbReference>
<dbReference type="SUPFAM" id="SSF52029">
    <property type="entry name" value="GroEL apical domain-like"/>
    <property type="match status" value="1"/>
</dbReference>
<dbReference type="SUPFAM" id="SSF48592">
    <property type="entry name" value="GroEL equatorial domain-like"/>
    <property type="match status" value="1"/>
</dbReference>
<dbReference type="SUPFAM" id="SSF54849">
    <property type="entry name" value="GroEL-intermediate domain like"/>
    <property type="match status" value="1"/>
</dbReference>
<dbReference type="PROSITE" id="PS00296">
    <property type="entry name" value="CHAPERONINS_CPN60"/>
    <property type="match status" value="1"/>
</dbReference>
<accession>Q9AFA6</accession>
<accession>Q5YNW4</accession>